<gene>
    <name evidence="2" type="primary">PA</name>
</gene>
<accession>P13166</accession>
<accession>Q08II3</accession>
<keyword id="KW-0002">3D-structure</keyword>
<keyword id="KW-1157">Cap snatching</keyword>
<keyword id="KW-0255">Endonuclease</keyword>
<keyword id="KW-1262">Eukaryotic host gene expression shutoff by virus</keyword>
<keyword id="KW-1191">Eukaryotic host transcription shutoff by virus</keyword>
<keyword id="KW-1035">Host cytoplasm</keyword>
<keyword id="KW-1190">Host gene expression shutoff by virus</keyword>
<keyword id="KW-1048">Host nucleus</keyword>
<keyword id="KW-0945">Host-virus interaction</keyword>
<keyword id="KW-0378">Hydrolase</keyword>
<keyword id="KW-1104">Inhibition of host RNA polymerase II by virus</keyword>
<keyword id="KW-0464">Manganese</keyword>
<keyword id="KW-0479">Metal-binding</keyword>
<keyword id="KW-0540">Nuclease</keyword>
<keyword id="KW-0597">Phosphoprotein</keyword>
<keyword id="KW-0688">Ribosomal frameshifting</keyword>
<comment type="function">
    <text evidence="2">Plays an essential role in viral RNA transcription and replication by forming the heterotrimeric polymerase complex together with PB1 and PB2 subunits. The complex transcribes viral mRNAs by using a unique mechanism called cap-snatching. It consists in the hijacking and cleavage of host capped pre-mRNAs. These short capped RNAs are then used as primers for viral mRNAs. The PB2 subunit is responsible for the binding of the 5' cap of cellular pre-mRNAs which are subsequently cleaved after 10-13 nucleotides by the PA subunit that carries the endonuclease activity.</text>
</comment>
<comment type="cofactor">
    <cofactor evidence="2">
        <name>Mn(2+)</name>
        <dbReference type="ChEBI" id="CHEBI:29035"/>
    </cofactor>
    <text evidence="2">Binds 2 manganese ions per subunit.</text>
</comment>
<comment type="subunit">
    <text evidence="1 2">Influenza RNA polymerase is composed of three subunits: PB1, PB2 and PA. Interacts (via C-terminus) with PB1 (via N-terminus).</text>
</comment>
<comment type="subcellular location">
    <subcellularLocation>
        <location evidence="2">Host cytoplasm</location>
    </subcellularLocation>
    <subcellularLocation>
        <location evidence="2">Host nucleus</location>
    </subcellularLocation>
    <text evidence="1 2">PB1 and PA are transported in the host nucleus as a complex.</text>
</comment>
<comment type="alternative products">
    <event type="ribosomal frameshifting"/>
    <isoform>
        <id>P13166-1</id>
        <name>PA</name>
        <sequence type="displayed"/>
    </isoform>
    <isoform>
        <id>P0CK83-1</id>
        <name>PA-X</name>
        <sequence type="external"/>
    </isoform>
</comment>
<comment type="PTM">
    <text evidence="1 2">Phosphorylated on serines and threonines by host kinases, including human casein kinase II.</text>
</comment>
<comment type="similarity">
    <text evidence="2">Belongs to the influenza viruses PA family.</text>
</comment>
<organismHost>
    <name type="scientific">Aves</name>
    <dbReference type="NCBI Taxonomy" id="8782"/>
</organismHost>
<organismHost>
    <name type="scientific">Equus caballus</name>
    <name type="common">Horse</name>
    <dbReference type="NCBI Taxonomy" id="9796"/>
</organismHost>
<evidence type="ECO:0000250" key="1">
    <source>
        <dbReference type="UniProtKB" id="P03433"/>
    </source>
</evidence>
<evidence type="ECO:0000255" key="2">
    <source>
        <dbReference type="HAMAP-Rule" id="MF_04063"/>
    </source>
</evidence>
<evidence type="ECO:0007829" key="3">
    <source>
        <dbReference type="PDB" id="4W9S"/>
    </source>
</evidence>
<proteinExistence type="evidence at protein level"/>
<name>PA_I80A6</name>
<dbReference type="EC" id="3.1.-.-" evidence="2"/>
<dbReference type="EMBL" id="M26083">
    <property type="protein sequence ID" value="AAA43098.1"/>
    <property type="molecule type" value="Genomic_RNA"/>
</dbReference>
<dbReference type="EMBL" id="AB274965">
    <property type="protein sequence ID" value="BAF32967.1"/>
    <property type="molecule type" value="Genomic_RNA"/>
</dbReference>
<dbReference type="PDB" id="4W9S">
    <property type="method" value="X-ray"/>
    <property type="resolution" value="1.80 A"/>
    <property type="chains" value="A=1-204"/>
</dbReference>
<dbReference type="PDBsum" id="4W9S"/>
<dbReference type="SMR" id="P13166"/>
<dbReference type="BindingDB" id="P13166"/>
<dbReference type="MEROPS" id="S62.001"/>
<dbReference type="Proteomes" id="UP000008578">
    <property type="component" value="Genome"/>
</dbReference>
<dbReference type="GO" id="GO:0030430">
    <property type="term" value="C:host cell cytoplasm"/>
    <property type="evidence" value="ECO:0007669"/>
    <property type="project" value="UniProtKB-SubCell"/>
</dbReference>
<dbReference type="GO" id="GO:0042025">
    <property type="term" value="C:host cell nucleus"/>
    <property type="evidence" value="ECO:0007669"/>
    <property type="project" value="UniProtKB-SubCell"/>
</dbReference>
<dbReference type="GO" id="GO:0004519">
    <property type="term" value="F:endonuclease activity"/>
    <property type="evidence" value="ECO:0007669"/>
    <property type="project" value="UniProtKB-KW"/>
</dbReference>
<dbReference type="GO" id="GO:0046872">
    <property type="term" value="F:metal ion binding"/>
    <property type="evidence" value="ECO:0007669"/>
    <property type="project" value="UniProtKB-KW"/>
</dbReference>
<dbReference type="GO" id="GO:0003723">
    <property type="term" value="F:RNA binding"/>
    <property type="evidence" value="ECO:0007669"/>
    <property type="project" value="UniProtKB-UniRule"/>
</dbReference>
<dbReference type="GO" id="GO:0075526">
    <property type="term" value="P:cap snatching"/>
    <property type="evidence" value="ECO:0007669"/>
    <property type="project" value="UniProtKB-UniRule"/>
</dbReference>
<dbReference type="GO" id="GO:0006351">
    <property type="term" value="P:DNA-templated transcription"/>
    <property type="evidence" value="ECO:0007669"/>
    <property type="project" value="UniProtKB-UniRule"/>
</dbReference>
<dbReference type="GO" id="GO:0039657">
    <property type="term" value="P:symbiont-mediated suppression of host gene expression"/>
    <property type="evidence" value="ECO:0007669"/>
    <property type="project" value="UniProtKB-KW"/>
</dbReference>
<dbReference type="GO" id="GO:0039523">
    <property type="term" value="P:symbiont-mediated suppression of host mRNA transcription via inhibition of RNA polymerase II activity"/>
    <property type="evidence" value="ECO:0007669"/>
    <property type="project" value="UniProtKB-UniRule"/>
</dbReference>
<dbReference type="GO" id="GO:0039694">
    <property type="term" value="P:viral RNA genome replication"/>
    <property type="evidence" value="ECO:0007669"/>
    <property type="project" value="InterPro"/>
</dbReference>
<dbReference type="GO" id="GO:0075523">
    <property type="term" value="P:viral translational frameshifting"/>
    <property type="evidence" value="ECO:0007669"/>
    <property type="project" value="UniProtKB-KW"/>
</dbReference>
<dbReference type="FunFam" id="3.40.91.90:FF:000001">
    <property type="entry name" value="Polymerase acidic protein"/>
    <property type="match status" value="1"/>
</dbReference>
<dbReference type="Gene3D" id="3.40.91.90">
    <property type="entry name" value="Influenza RNA-dependent RNA polymerase subunit PA, endonuclease domain"/>
    <property type="match status" value="1"/>
</dbReference>
<dbReference type="HAMAP" id="MF_04063">
    <property type="entry name" value="INFV_PA"/>
    <property type="match status" value="1"/>
</dbReference>
<dbReference type="InterPro" id="IPR037534">
    <property type="entry name" value="INFV_PA"/>
</dbReference>
<dbReference type="InterPro" id="IPR001009">
    <property type="entry name" value="PA/PA-X"/>
</dbReference>
<dbReference type="InterPro" id="IPR038372">
    <property type="entry name" value="PA/PA-X_sf"/>
</dbReference>
<dbReference type="Pfam" id="PF00603">
    <property type="entry name" value="Flu_PA"/>
    <property type="match status" value="1"/>
</dbReference>
<feature type="chain" id="PRO_0000078781" description="Polymerase acidic protein">
    <location>
        <begin position="1"/>
        <end position="716"/>
    </location>
</feature>
<feature type="short sequence motif" description="Nuclear localization signal 1 (NLS1)" evidence="1 2">
    <location>
        <begin position="124"/>
        <end position="139"/>
    </location>
</feature>
<feature type="short sequence motif" description="Nuclear localization signal 2 (NLS2)" evidence="1 2">
    <location>
        <begin position="184"/>
        <end position="247"/>
    </location>
</feature>
<feature type="binding site" evidence="2">
    <location>
        <position position="41"/>
    </location>
    <ligand>
        <name>Mn(2+)</name>
        <dbReference type="ChEBI" id="CHEBI:29035"/>
        <label>1</label>
    </ligand>
</feature>
<feature type="binding site" evidence="2">
    <location>
        <position position="80"/>
    </location>
    <ligand>
        <name>Mn(2+)</name>
        <dbReference type="ChEBI" id="CHEBI:29035"/>
        <label>2</label>
    </ligand>
</feature>
<feature type="binding site" evidence="2">
    <location>
        <position position="108"/>
    </location>
    <ligand>
        <name>Mn(2+)</name>
        <dbReference type="ChEBI" id="CHEBI:29035"/>
        <label>1</label>
    </ligand>
</feature>
<feature type="binding site" evidence="2">
    <location>
        <position position="108"/>
    </location>
    <ligand>
        <name>Mn(2+)</name>
        <dbReference type="ChEBI" id="CHEBI:29035"/>
        <label>2</label>
    </ligand>
</feature>
<feature type="binding site" evidence="2">
    <location>
        <position position="119"/>
    </location>
    <ligand>
        <name>Mn(2+)</name>
        <dbReference type="ChEBI" id="CHEBI:29035"/>
        <label>1</label>
    </ligand>
</feature>
<feature type="binding site" evidence="2">
    <location>
        <position position="120"/>
    </location>
    <ligand>
        <name>Mn(2+)</name>
        <dbReference type="ChEBI" id="CHEBI:29035"/>
        <label>1</label>
    </ligand>
</feature>
<feature type="sequence conflict" description="In Ref. 2; BAF32967." ref="2">
    <original>I</original>
    <variation>M</variation>
    <location>
        <position position="441"/>
    </location>
</feature>
<feature type="sequence conflict" description="In Ref. 2; BAF32967." ref="2">
    <original>D</original>
    <variation>Y</variation>
    <location>
        <position position="464"/>
    </location>
</feature>
<feature type="helix" evidence="3">
    <location>
        <begin position="1"/>
        <end position="8"/>
    </location>
</feature>
<feature type="helix" evidence="3">
    <location>
        <begin position="11"/>
        <end position="23"/>
    </location>
</feature>
<feature type="turn" evidence="3">
    <location>
        <begin position="28"/>
        <end position="30"/>
    </location>
</feature>
<feature type="helix" evidence="3">
    <location>
        <begin position="32"/>
        <end position="49"/>
    </location>
</feature>
<feature type="strand" evidence="3">
    <location>
        <begin position="52"/>
        <end position="54"/>
    </location>
</feature>
<feature type="strand" evidence="3">
    <location>
        <begin position="60"/>
        <end position="62"/>
    </location>
</feature>
<feature type="strand" evidence="3">
    <location>
        <begin position="73"/>
        <end position="78"/>
    </location>
</feature>
<feature type="helix" evidence="3">
    <location>
        <begin position="84"/>
        <end position="98"/>
    </location>
</feature>
<feature type="strand" evidence="3">
    <location>
        <begin position="108"/>
        <end position="111"/>
    </location>
</feature>
<feature type="turn" evidence="3">
    <location>
        <begin position="112"/>
        <end position="115"/>
    </location>
</feature>
<feature type="strand" evidence="3">
    <location>
        <begin position="116"/>
        <end position="125"/>
    </location>
</feature>
<feature type="helix" evidence="3">
    <location>
        <begin position="127"/>
        <end position="138"/>
    </location>
</feature>
<feature type="strand" evidence="3">
    <location>
        <begin position="143"/>
        <end position="149"/>
    </location>
</feature>
<feature type="strand" evidence="3">
    <location>
        <begin position="154"/>
        <end position="156"/>
    </location>
</feature>
<feature type="helix" evidence="3">
    <location>
        <begin position="157"/>
        <end position="159"/>
    </location>
</feature>
<feature type="helix" evidence="3">
    <location>
        <begin position="165"/>
        <end position="184"/>
    </location>
</feature>
<feature type="helix" evidence="3">
    <location>
        <begin position="188"/>
        <end position="193"/>
    </location>
</feature>
<reference key="1">
    <citation type="journal article" date="1989" name="Virology">
        <title>Evolutionary pathways of the PA genes of influenza A viruses.</title>
        <authorList>
            <person name="Okazaki K."/>
            <person name="Kawaoka Y."/>
            <person name="Webster R.G."/>
        </authorList>
    </citation>
    <scope>NUCLEOTIDE SEQUENCE [GENOMIC RNA]</scope>
</reference>
<reference key="2">
    <citation type="submission" date="2006-09" db="EMBL/GenBank/DDBJ databases">
        <title>Evolutionary characterization of H3N8 viruses isolated from ducks in Hokkaido.</title>
        <authorList>
            <person name="Kida H."/>
            <person name="Sakoda Y."/>
        </authorList>
    </citation>
    <scope>NUCLEOTIDE SEQUENCE [GENOMIC RNA]</scope>
</reference>
<protein>
    <recommendedName>
        <fullName evidence="2">Polymerase acidic protein</fullName>
        <ecNumber evidence="2">3.1.-.-</ecNumber>
    </recommendedName>
    <alternativeName>
        <fullName evidence="2">RNA-directed RNA polymerase subunit P2</fullName>
    </alternativeName>
</protein>
<organism>
    <name type="scientific">Influenza A virus (strain A/Duck/Hokkaido/8/1980 H3N8)</name>
    <dbReference type="NCBI Taxonomy" id="387207"/>
    <lineage>
        <taxon>Viruses</taxon>
        <taxon>Riboviria</taxon>
        <taxon>Orthornavirae</taxon>
        <taxon>Negarnaviricota</taxon>
        <taxon>Polyploviricotina</taxon>
        <taxon>Insthoviricetes</taxon>
        <taxon>Articulavirales</taxon>
        <taxon>Orthomyxoviridae</taxon>
        <taxon>Alphainfluenzavirus</taxon>
        <taxon>Alphainfluenzavirus influenzae</taxon>
        <taxon>Influenza A virus</taxon>
    </lineage>
</organism>
<sequence length="716" mass="82474">MEDFVRQCFNPMIVELAEKAMKEYGEDPKIETNKFAAICTHLEVCFMYSDFHFIDERGESIIVESGDPNALLKHRFEIIEGRDRTMAWTVVNSICNTTGVEKPKFLPDLYDYKENRFIEIGVTRREVHIYYLEKANKIKSEKTHIHIFSFTGEEMATKADYTLDEESRARIKTRLFTIRQEMASRGLWDSFRQSERGEETVEERFEITGTMRRLADQSLPPNFSSLENFRAYVDGFEPNGCIEGKLSQMSKEVNAKIEPFLKTTPRPLRLPDGPPCSQRSKFLLMDALKLSIEDPSHEGEGIPLYDAIKCMKTFFGWKEPNIIKPHERGINPNYLLAWKQVLAELQDIENEEKIPKTKNMKKTSQLKWALGENMAPEKVDFEDCKDVSDLKQYDSDEPETRSLASWIQSEFNKACELTDSSWIELDEIGEDIAPIEHIASIRRNYFTAEVSHCRATEYIMKGVDINTALLNASCAAMDDFQLIPMISKCRTKEGRRKTNLYGFIIKGRSHLRNDTDVVNFVSMEFSLTDPRLEPHKWEKYCVLEIGDMLLRTAIGQVSRPMFLYVRTNGTSKIKMKWGMEMRRCLLQSLQQIESMIEAESSVKEKDMTKEFFENKSETWPIGESPKGVEEGSIGKVCRTLLAKSVFNSLYASPQLEGFSAESRKLLLIVQALRDNLEPGTFDLGGLYEAIEECLINDPWVLLNASWFNSFLTHALK</sequence>